<organism>
    <name type="scientific">Staphylococcus saprophyticus subsp. saprophyticus (strain ATCC 15305 / DSM 20229 / NCIMB 8711 / NCTC 7292 / S-41)</name>
    <dbReference type="NCBI Taxonomy" id="342451"/>
    <lineage>
        <taxon>Bacteria</taxon>
        <taxon>Bacillati</taxon>
        <taxon>Bacillota</taxon>
        <taxon>Bacilli</taxon>
        <taxon>Bacillales</taxon>
        <taxon>Staphylococcaceae</taxon>
        <taxon>Staphylococcus</taxon>
    </lineage>
</organism>
<accession>Q49XT1</accession>
<reference key="1">
    <citation type="journal article" date="2005" name="Proc. Natl. Acad. Sci. U.S.A.">
        <title>Whole genome sequence of Staphylococcus saprophyticus reveals the pathogenesis of uncomplicated urinary tract infection.</title>
        <authorList>
            <person name="Kuroda M."/>
            <person name="Yamashita A."/>
            <person name="Hirakawa H."/>
            <person name="Kumano M."/>
            <person name="Morikawa K."/>
            <person name="Higashide M."/>
            <person name="Maruyama A."/>
            <person name="Inose Y."/>
            <person name="Matoba K."/>
            <person name="Toh H."/>
            <person name="Kuhara S."/>
            <person name="Hattori M."/>
            <person name="Ohta T."/>
        </authorList>
    </citation>
    <scope>NUCLEOTIDE SEQUENCE [LARGE SCALE GENOMIC DNA]</scope>
    <source>
        <strain>ATCC 15305 / DSM 20229 / NCIMB 8711 / NCTC 7292 / S-41</strain>
    </source>
</reference>
<evidence type="ECO:0000255" key="1">
    <source>
        <dbReference type="HAMAP-Rule" id="MF_00238"/>
    </source>
</evidence>
<feature type="chain" id="PRO_1000048292" description="Cytidylate kinase">
    <location>
        <begin position="1"/>
        <end position="219"/>
    </location>
</feature>
<feature type="binding site" evidence="1">
    <location>
        <begin position="10"/>
        <end position="18"/>
    </location>
    <ligand>
        <name>ATP</name>
        <dbReference type="ChEBI" id="CHEBI:30616"/>
    </ligand>
</feature>
<comment type="catalytic activity">
    <reaction evidence="1">
        <text>CMP + ATP = CDP + ADP</text>
        <dbReference type="Rhea" id="RHEA:11600"/>
        <dbReference type="ChEBI" id="CHEBI:30616"/>
        <dbReference type="ChEBI" id="CHEBI:58069"/>
        <dbReference type="ChEBI" id="CHEBI:60377"/>
        <dbReference type="ChEBI" id="CHEBI:456216"/>
        <dbReference type="EC" id="2.7.4.25"/>
    </reaction>
</comment>
<comment type="catalytic activity">
    <reaction evidence="1">
        <text>dCMP + ATP = dCDP + ADP</text>
        <dbReference type="Rhea" id="RHEA:25094"/>
        <dbReference type="ChEBI" id="CHEBI:30616"/>
        <dbReference type="ChEBI" id="CHEBI:57566"/>
        <dbReference type="ChEBI" id="CHEBI:58593"/>
        <dbReference type="ChEBI" id="CHEBI:456216"/>
        <dbReference type="EC" id="2.7.4.25"/>
    </reaction>
</comment>
<comment type="subcellular location">
    <subcellularLocation>
        <location evidence="1">Cytoplasm</location>
    </subcellularLocation>
</comment>
<comment type="similarity">
    <text evidence="1">Belongs to the cytidylate kinase family. Type 1 subfamily.</text>
</comment>
<protein>
    <recommendedName>
        <fullName evidence="1">Cytidylate kinase</fullName>
        <shortName evidence="1">CK</shortName>
        <ecNumber evidence="1">2.7.4.25</ecNumber>
    </recommendedName>
    <alternativeName>
        <fullName evidence="1">Cytidine monophosphate kinase</fullName>
        <shortName evidence="1">CMP kinase</shortName>
    </alternativeName>
</protein>
<proteinExistence type="inferred from homology"/>
<sequence>MKLLNIALDGPAAAGKSTIAKLLAAKLSMIYVDTGAMYRAITYKYLQQNKPEDFDQLIETTELSLTYDKDKGQRVILDNQDVTDYLRENDVTNHVSYVASKEAVRTFSVNKQQELAAKKGIVMDGRDIGTVVLPDADLKVYMIASVEERAVRRQKDNEERGIVSNVEQLKQEIADRDQYDMNRDISPLKKADDAITVDTTGKSIEIVTQEILALVHKIS</sequence>
<keyword id="KW-0067">ATP-binding</keyword>
<keyword id="KW-0963">Cytoplasm</keyword>
<keyword id="KW-0418">Kinase</keyword>
<keyword id="KW-0547">Nucleotide-binding</keyword>
<keyword id="KW-1185">Reference proteome</keyword>
<keyword id="KW-0808">Transferase</keyword>
<name>KCY_STAS1</name>
<gene>
    <name evidence="1" type="primary">cmk</name>
    <name type="ordered locus">SSP1269</name>
</gene>
<dbReference type="EC" id="2.7.4.25" evidence="1"/>
<dbReference type="EMBL" id="AP008934">
    <property type="protein sequence ID" value="BAE18414.1"/>
    <property type="molecule type" value="Genomic_DNA"/>
</dbReference>
<dbReference type="RefSeq" id="WP_002483244.1">
    <property type="nucleotide sequence ID" value="NZ_MTGA01000038.1"/>
</dbReference>
<dbReference type="SMR" id="Q49XT1"/>
<dbReference type="GeneID" id="66867499"/>
<dbReference type="KEGG" id="ssp:SSP1269"/>
<dbReference type="eggNOG" id="COG0283">
    <property type="taxonomic scope" value="Bacteria"/>
</dbReference>
<dbReference type="HOGENOM" id="CLU_079959_0_2_9"/>
<dbReference type="OrthoDB" id="9807434at2"/>
<dbReference type="Proteomes" id="UP000006371">
    <property type="component" value="Chromosome"/>
</dbReference>
<dbReference type="GO" id="GO:0005829">
    <property type="term" value="C:cytosol"/>
    <property type="evidence" value="ECO:0007669"/>
    <property type="project" value="TreeGrafter"/>
</dbReference>
<dbReference type="GO" id="GO:0005524">
    <property type="term" value="F:ATP binding"/>
    <property type="evidence" value="ECO:0007669"/>
    <property type="project" value="UniProtKB-UniRule"/>
</dbReference>
<dbReference type="GO" id="GO:0036430">
    <property type="term" value="F:CMP kinase activity"/>
    <property type="evidence" value="ECO:0007669"/>
    <property type="project" value="RHEA"/>
</dbReference>
<dbReference type="GO" id="GO:0036431">
    <property type="term" value="F:dCMP kinase activity"/>
    <property type="evidence" value="ECO:0007669"/>
    <property type="project" value="RHEA"/>
</dbReference>
<dbReference type="GO" id="GO:0015949">
    <property type="term" value="P:nucleobase-containing small molecule interconversion"/>
    <property type="evidence" value="ECO:0007669"/>
    <property type="project" value="TreeGrafter"/>
</dbReference>
<dbReference type="GO" id="GO:0006220">
    <property type="term" value="P:pyrimidine nucleotide metabolic process"/>
    <property type="evidence" value="ECO:0007669"/>
    <property type="project" value="UniProtKB-UniRule"/>
</dbReference>
<dbReference type="CDD" id="cd02020">
    <property type="entry name" value="CMPK"/>
    <property type="match status" value="1"/>
</dbReference>
<dbReference type="Gene3D" id="3.40.50.300">
    <property type="entry name" value="P-loop containing nucleotide triphosphate hydrolases"/>
    <property type="match status" value="1"/>
</dbReference>
<dbReference type="HAMAP" id="MF_00238">
    <property type="entry name" value="Cytidyl_kinase_type1"/>
    <property type="match status" value="1"/>
</dbReference>
<dbReference type="InterPro" id="IPR003136">
    <property type="entry name" value="Cytidylate_kin"/>
</dbReference>
<dbReference type="InterPro" id="IPR011994">
    <property type="entry name" value="Cytidylate_kinase_dom"/>
</dbReference>
<dbReference type="InterPro" id="IPR027417">
    <property type="entry name" value="P-loop_NTPase"/>
</dbReference>
<dbReference type="NCBIfam" id="TIGR00017">
    <property type="entry name" value="cmk"/>
    <property type="match status" value="1"/>
</dbReference>
<dbReference type="PANTHER" id="PTHR21299:SF2">
    <property type="entry name" value="CYTIDYLATE KINASE"/>
    <property type="match status" value="1"/>
</dbReference>
<dbReference type="PANTHER" id="PTHR21299">
    <property type="entry name" value="CYTIDYLATE KINASE/PANTOATE-BETA-ALANINE LIGASE"/>
    <property type="match status" value="1"/>
</dbReference>
<dbReference type="Pfam" id="PF02224">
    <property type="entry name" value="Cytidylate_kin"/>
    <property type="match status" value="1"/>
</dbReference>
<dbReference type="SUPFAM" id="SSF52540">
    <property type="entry name" value="P-loop containing nucleoside triphosphate hydrolases"/>
    <property type="match status" value="1"/>
</dbReference>